<proteinExistence type="evidence at protein level"/>
<reference key="1">
    <citation type="journal article" date="2001" name="Plant Sci.">
        <title>Isolation and analysis of expression mechanisms of a rice gene, EL5, which shows structural similarity to ATL family from Arabidopsis, in response to N-acetylchitooligosaccharide elicitor.</title>
        <authorList>
            <person name="Takai R."/>
            <person name="Hasegawa K."/>
            <person name="Kaku H."/>
            <person name="Shibuya N."/>
            <person name="Minami E."/>
        </authorList>
    </citation>
    <scope>NUCLEOTIDE SEQUENCE [MRNA]</scope>
    <scope>INDUCTION</scope>
    <source>
        <strain>cv. Nipponbare</strain>
    </source>
</reference>
<reference key="2">
    <citation type="journal article" date="2005" name="Nature">
        <title>The map-based sequence of the rice genome.</title>
        <authorList>
            <consortium name="International rice genome sequencing project (IRGSP)"/>
        </authorList>
    </citation>
    <scope>NUCLEOTIDE SEQUENCE [LARGE SCALE GENOMIC DNA]</scope>
    <source>
        <strain>cv. Nipponbare</strain>
    </source>
</reference>
<reference key="3">
    <citation type="journal article" date="2008" name="Nucleic Acids Res.">
        <title>The rice annotation project database (RAP-DB): 2008 update.</title>
        <authorList>
            <consortium name="The rice annotation project (RAP)"/>
        </authorList>
    </citation>
    <scope>GENOME REANNOTATION</scope>
    <source>
        <strain>cv. Nipponbare</strain>
    </source>
</reference>
<reference key="4">
    <citation type="journal article" date="2013" name="Rice">
        <title>Improvement of the Oryza sativa Nipponbare reference genome using next generation sequence and optical map data.</title>
        <authorList>
            <person name="Kawahara Y."/>
            <person name="de la Bastide M."/>
            <person name="Hamilton J.P."/>
            <person name="Kanamori H."/>
            <person name="McCombie W.R."/>
            <person name="Ouyang S."/>
            <person name="Schwartz D.C."/>
            <person name="Tanaka T."/>
            <person name="Wu J."/>
            <person name="Zhou S."/>
            <person name="Childs K.L."/>
            <person name="Davidson R.M."/>
            <person name="Lin H."/>
            <person name="Quesada-Ocampo L."/>
            <person name="Vaillancourt B."/>
            <person name="Sakai H."/>
            <person name="Lee S.S."/>
            <person name="Kim J."/>
            <person name="Numa H."/>
            <person name="Itoh T."/>
            <person name="Buell C.R."/>
            <person name="Matsumoto T."/>
        </authorList>
    </citation>
    <scope>GENOME REANNOTATION</scope>
    <source>
        <strain>cv. Nipponbare</strain>
    </source>
</reference>
<reference key="5">
    <citation type="submission" date="2006-10" db="EMBL/GenBank/DDBJ databases">
        <title>Oryza sativa full length cDNA.</title>
        <authorList>
            <consortium name="The rice full-length cDNA consortium"/>
        </authorList>
    </citation>
    <scope>NUCLEOTIDE SEQUENCE [LARGE SCALE MRNA]</scope>
    <source>
        <strain>cv. Nipponbare</strain>
    </source>
</reference>
<reference key="6">
    <citation type="journal article" date="2002" name="Plant J.">
        <title>EL5, a rice N-acetylchitooligosaccharide elicitor-responsive RING-H2 finger protein, is a ubiquitin ligase which functions in vitro in co-operation with an elicitor-responsive ubiquitin-conjugating enzyme, OsUBC5b.</title>
        <authorList>
            <person name="Takai R."/>
            <person name="Matsuda N."/>
            <person name="Nakano A."/>
            <person name="Hasegawa K."/>
            <person name="Akimoto C."/>
            <person name="Shibuya N."/>
            <person name="Minami E."/>
        </authorList>
    </citation>
    <scope>FUNCTION</scope>
    <scope>CATALYTIC ACTIVITY</scope>
    <scope>DOMAIN</scope>
    <scope>MUTAGENESIS OF CYS-153</scope>
</reference>
<reference key="7">
    <citation type="journal article" date="2005" name="J. Biol. Chem.">
        <title>Active site residues and amino acid specificity of the ubiquitin carrier protein-binding RING-H2 finger domain.</title>
        <authorList>
            <person name="Katoh S."/>
            <person name="Tsunoda Y."/>
            <person name="Murata K."/>
            <person name="Minami E."/>
            <person name="Katoh E."/>
        </authorList>
    </citation>
    <scope>FUNCTION</scope>
    <scope>CATALYTIC ACTIVITY</scope>
    <scope>MUTAGENESIS OF VAL-136; LEU-138; ARG-148; CYS-153; GLU-160; VAL-162; ASP-163; MET-164; TRP-165; LEU-166; THR-171; LEU-174 AND ARG-176</scope>
</reference>
<reference key="8">
    <citation type="journal article" date="2007" name="Plant J.">
        <title>RT RING-H2 type ubiquitin ligase EL5 is involved in root development through the maintenance of cell viability in rice.</title>
        <authorList>
            <person name="Koiwai H."/>
            <person name="Tagiri A."/>
            <person name="Katoh S."/>
            <person name="Katoh E."/>
            <person name="Ichikawa H."/>
            <person name="Minami E."/>
            <person name="Nishizawa Y."/>
        </authorList>
    </citation>
    <scope>FUNCTION</scope>
    <scope>SUBCELLULAR LOCATION</scope>
    <scope>MUTAGENESIS OF LEU-138; CYS-153; VAL-162 AND TRP-165</scope>
</reference>
<reference key="9">
    <citation type="journal article" date="2008" name="Plant Signal. Behav.">
        <title>EL5 is involved in root development as an anti-cell death ubiquitin ligase.</title>
        <authorList>
            <person name="Nishizawa Y."/>
            <person name="Katoh S."/>
            <person name="Koiwai H."/>
            <person name="Katoh E."/>
        </authorList>
    </citation>
    <scope>FUNCTION</scope>
</reference>
<reference key="10">
    <citation type="journal article" date="2003" name="J. Biol. Chem.">
        <title>High precision NMR structure and function of the RING-H2 finger domain of EL5, a rice protein whose expression is increased upon exposure to pathogen-derived oligosaccharides.</title>
        <authorList>
            <person name="Katoh S."/>
            <person name="Hong C."/>
            <person name="Tsunoda Y."/>
            <person name="Murata K."/>
            <person name="Takai R."/>
            <person name="Minami E."/>
            <person name="Yamazaki T."/>
            <person name="Katoh E."/>
        </authorList>
    </citation>
    <scope>STRUCTURE BY NMR OF 129-181 IN COMPLEX WITH ZINC</scope>
</reference>
<sequence length="325" mass="33239">MVRGVEQGGPAMDESSSSSSPSPVSAPAGQAAMTAGGIATVAAVLIVFAALTLAFVLLQCYCDERRRAVTTTSTSGRGRRPRPRRRSGSGGDGGTGGGVDPEVLRSLPVTVYSRSTAAAAAKEEEEEDDDGVECAVCLAELEDGEEARFLPRCGHGFHAECVDMWLGSHSTCPLCRLTVVVPPPPLPPVPPEPPASYTVSLPASVLLGLSDHGAGAVTMTAEGRSTLVIEIPESAASTTPRDAAARSSPSLARLRSLRRLWSFGRQGAAGSTSSCSCATGGDNDDGDVEHGVSVTVAIRAVEAATPARPPEAEAGARTAAAHVRN</sequence>
<feature type="chain" id="PRO_0000055900" description="E3 ubiquitin-protein ligase EL5">
    <location>
        <begin position="1"/>
        <end position="325"/>
    </location>
</feature>
<feature type="transmembrane region" description="Helical" evidence="1">
    <location>
        <begin position="38"/>
        <end position="58"/>
    </location>
</feature>
<feature type="zinc finger region" description="RING-type; atypical" evidence="2">
    <location>
        <begin position="134"/>
        <end position="176"/>
    </location>
</feature>
<feature type="region of interest" description="Disordered" evidence="3">
    <location>
        <begin position="1"/>
        <end position="29"/>
    </location>
</feature>
<feature type="region of interest" description="Disordered" evidence="3">
    <location>
        <begin position="70"/>
        <end position="105"/>
    </location>
</feature>
<feature type="region of interest" description="Disordered" evidence="3">
    <location>
        <begin position="267"/>
        <end position="289"/>
    </location>
</feature>
<feature type="region of interest" description="Disordered" evidence="3">
    <location>
        <begin position="303"/>
        <end position="325"/>
    </location>
</feature>
<feature type="compositionally biased region" description="Low complexity" evidence="3">
    <location>
        <begin position="15"/>
        <end position="28"/>
    </location>
</feature>
<feature type="compositionally biased region" description="Basic residues" evidence="3">
    <location>
        <begin position="77"/>
        <end position="87"/>
    </location>
</feature>
<feature type="compositionally biased region" description="Gly residues" evidence="3">
    <location>
        <begin position="88"/>
        <end position="99"/>
    </location>
</feature>
<feature type="compositionally biased region" description="Low complexity" evidence="3">
    <location>
        <begin position="268"/>
        <end position="281"/>
    </location>
</feature>
<feature type="mutagenesis site" description="Loss of E3 ubiquitin ligase activity." evidence="6">
    <original>V</original>
    <variation>A</variation>
    <location>
        <position position="136"/>
    </location>
</feature>
<feature type="mutagenesis site" description="Reduces E3 ubiquitin ligase activity." evidence="6 7">
    <original>L</original>
    <variation>A</variation>
    <location>
        <position position="138"/>
    </location>
</feature>
<feature type="mutagenesis site" description="Reduces E3 ubiquitin ligase activity." evidence="6">
    <original>R</original>
    <variation>A</variation>
    <location>
        <position position="148"/>
    </location>
</feature>
<feature type="mutagenesis site" description="Loss of E3 ubiquitin ligase activity. Rootless phenotype." evidence="5 6 7">
    <original>C</original>
    <variation>A</variation>
    <location>
        <position position="153"/>
    </location>
</feature>
<feature type="mutagenesis site" description="Loss of E3 ubiquitin ligase activity." evidence="5 6 7">
    <original>C</original>
    <variation>K</variation>
    <location>
        <position position="153"/>
    </location>
</feature>
<feature type="mutagenesis site" description="No effect on E3 ubiquitin ligase activity." evidence="6">
    <original>E</original>
    <variation>A</variation>
    <location>
        <position position="160"/>
    </location>
</feature>
<feature type="mutagenesis site" description="Reduces E3 ubiquitin ligase activity. Short crown roots with necrotic lateral roots." evidence="6 7">
    <original>V</original>
    <variation>A</variation>
    <location>
        <position position="162"/>
    </location>
</feature>
<feature type="mutagenesis site" description="Reduces E3 ubiquitin ligase activity." evidence="6">
    <original>D</original>
    <variation>A</variation>
    <location>
        <position position="163"/>
    </location>
</feature>
<feature type="mutagenesis site" description="No effect on E3 ubiquitin ligase activity." evidence="6">
    <original>M</original>
    <variation>A</variation>
    <location>
        <position position="164"/>
    </location>
</feature>
<feature type="mutagenesis site" description="Loss of E3 ubiquitin ligase activity. Rootless phenotype." evidence="6 7">
    <original>W</original>
    <variation>A</variation>
    <location>
        <position position="165"/>
    </location>
</feature>
<feature type="mutagenesis site" description="Loss of E3 ubiquitin ligase activity." evidence="6">
    <original>L</original>
    <variation>A</variation>
    <location>
        <position position="166"/>
    </location>
</feature>
<feature type="mutagenesis site" description="No effect on E3 ubiquitin ligase activity." evidence="6">
    <original>T</original>
    <variation>A</variation>
    <location>
        <position position="171"/>
    </location>
</feature>
<feature type="mutagenesis site" description="Reduces E3 ubiquitin ligase activity." evidence="6">
    <original>L</original>
    <variation>A</variation>
    <location>
        <position position="174"/>
    </location>
</feature>
<feature type="mutagenesis site" description="Loss of E3 ubiquitin ligase activity." evidence="6">
    <original>R</original>
    <variation>A</variation>
    <variation>D</variation>
    <location>
        <position position="176"/>
    </location>
</feature>
<feature type="turn" evidence="10">
    <location>
        <begin position="135"/>
        <end position="137"/>
    </location>
</feature>
<feature type="strand" evidence="10">
    <location>
        <begin position="151"/>
        <end position="153"/>
    </location>
</feature>
<feature type="helix" evidence="10">
    <location>
        <begin position="161"/>
        <end position="164"/>
    </location>
</feature>
<feature type="turn" evidence="10">
    <location>
        <begin position="165"/>
        <end position="168"/>
    </location>
</feature>
<feature type="strand" evidence="10">
    <location>
        <begin position="173"/>
        <end position="175"/>
    </location>
</feature>
<dbReference type="EC" id="2.3.2.27" evidence="5 6"/>
<dbReference type="EMBL" id="AB045120">
    <property type="protein sequence ID" value="BAA96874.1"/>
    <property type="molecule type" value="mRNA"/>
</dbReference>
<dbReference type="EMBL" id="AP005883">
    <property type="protein sequence ID" value="BAD16530.1"/>
    <property type="molecule type" value="Genomic_DNA"/>
</dbReference>
<dbReference type="EMBL" id="AP005883">
    <property type="protein sequence ID" value="BAD16534.1"/>
    <property type="molecule type" value="Genomic_DNA"/>
</dbReference>
<dbReference type="EMBL" id="AP005883">
    <property type="protein sequence ID" value="BAD16538.1"/>
    <property type="molecule type" value="Genomic_DNA"/>
</dbReference>
<dbReference type="EMBL" id="AP005883">
    <property type="protein sequence ID" value="BAD16542.1"/>
    <property type="molecule type" value="Genomic_DNA"/>
</dbReference>
<dbReference type="EMBL" id="AP005883">
    <property type="protein sequence ID" value="BAD16545.1"/>
    <property type="molecule type" value="Genomic_DNA"/>
</dbReference>
<dbReference type="EMBL" id="AP005883">
    <property type="protein sequence ID" value="BAD16550.1"/>
    <property type="molecule type" value="Genomic_DNA"/>
</dbReference>
<dbReference type="EMBL" id="AP008208">
    <property type="protein sequence ID" value="BAF09063.1"/>
    <property type="molecule type" value="Genomic_DNA"/>
</dbReference>
<dbReference type="EMBL" id="AP014958">
    <property type="protein sequence ID" value="BAS79271.1"/>
    <property type="molecule type" value="Genomic_DNA"/>
</dbReference>
<dbReference type="EMBL" id="AP014958">
    <property type="protein sequence ID" value="BAS79266.1"/>
    <property type="molecule type" value="Genomic_DNA"/>
</dbReference>
<dbReference type="EMBL" id="AP014958">
    <property type="protein sequence ID" value="BAS79262.1"/>
    <property type="molecule type" value="Genomic_DNA"/>
</dbReference>
<dbReference type="EMBL" id="AP014958">
    <property type="protein sequence ID" value="BAS79258.1"/>
    <property type="molecule type" value="Genomic_DNA"/>
</dbReference>
<dbReference type="EMBL" id="AP014958">
    <property type="protein sequence ID" value="BAS79254.1"/>
    <property type="molecule type" value="Genomic_DNA"/>
</dbReference>
<dbReference type="EMBL" id="AP014958">
    <property type="protein sequence ID" value="BAS79250.1"/>
    <property type="molecule type" value="Genomic_DNA"/>
</dbReference>
<dbReference type="EMBL" id="AK243670">
    <property type="status" value="NOT_ANNOTATED_CDS"/>
    <property type="molecule type" value="mRNA"/>
</dbReference>
<dbReference type="PDB" id="1IYM">
    <property type="method" value="NMR"/>
    <property type="chains" value="A=129-181"/>
</dbReference>
<dbReference type="PDBsum" id="1IYM"/>
<dbReference type="BMRB" id="Q9LRB7"/>
<dbReference type="SMR" id="Q9LRB7"/>
<dbReference type="STRING" id="39947.Q9LRB7"/>
<dbReference type="PaxDb" id="39947-Q9LRB7"/>
<dbReference type="EnsemblPlants" id="Os02t0559800-01">
    <property type="protein sequence ID" value="Os02t0559800-01"/>
    <property type="gene ID" value="Os02g0559800"/>
</dbReference>
<dbReference type="EnsemblPlants" id="Os02t0560200-01">
    <property type="protein sequence ID" value="Os02t0560200-01"/>
    <property type="gene ID" value="Os02g0560200"/>
</dbReference>
<dbReference type="EnsemblPlants" id="Os02t0560600-01">
    <property type="protein sequence ID" value="Os02t0560600-01"/>
    <property type="gene ID" value="Os02g0560600"/>
</dbReference>
<dbReference type="EnsemblPlants" id="Os02t0561000-01">
    <property type="protein sequence ID" value="Os02t0561000-01"/>
    <property type="gene ID" value="Os02g0561000"/>
</dbReference>
<dbReference type="EnsemblPlants" id="Os02t0561400-01">
    <property type="protein sequence ID" value="Os02t0561400-01"/>
    <property type="gene ID" value="Os02g0561400"/>
</dbReference>
<dbReference type="EnsemblPlants" id="Os02t0561800-01">
    <property type="protein sequence ID" value="Os02t0561800-01"/>
    <property type="gene ID" value="Os02g0561800"/>
</dbReference>
<dbReference type="GeneID" id="107276747"/>
<dbReference type="GeneID" id="107276748"/>
<dbReference type="GeneID" id="107276749"/>
<dbReference type="GeneID" id="107276750"/>
<dbReference type="GeneID" id="107276751"/>
<dbReference type="GeneID" id="4329685"/>
<dbReference type="Gramene" id="Os02t0559800-01">
    <property type="protein sequence ID" value="Os02t0559800-01"/>
    <property type="gene ID" value="Os02g0559800"/>
</dbReference>
<dbReference type="Gramene" id="Os02t0560200-01">
    <property type="protein sequence ID" value="Os02t0560200-01"/>
    <property type="gene ID" value="Os02g0560200"/>
</dbReference>
<dbReference type="Gramene" id="Os02t0560600-01">
    <property type="protein sequence ID" value="Os02t0560600-01"/>
    <property type="gene ID" value="Os02g0560600"/>
</dbReference>
<dbReference type="Gramene" id="Os02t0561000-01">
    <property type="protein sequence ID" value="Os02t0561000-01"/>
    <property type="gene ID" value="Os02g0561000"/>
</dbReference>
<dbReference type="Gramene" id="Os02t0561400-01">
    <property type="protein sequence ID" value="Os02t0561400-01"/>
    <property type="gene ID" value="Os02g0561400"/>
</dbReference>
<dbReference type="Gramene" id="Os02t0561800-01">
    <property type="protein sequence ID" value="Os02t0561800-01"/>
    <property type="gene ID" value="Os02g0561800"/>
</dbReference>
<dbReference type="KEGG" id="dosa:Os02g0559800"/>
<dbReference type="KEGG" id="osa:107276747"/>
<dbReference type="KEGG" id="osa:107276748"/>
<dbReference type="KEGG" id="osa:107276749"/>
<dbReference type="KEGG" id="osa:107276750"/>
<dbReference type="KEGG" id="osa:107276751"/>
<dbReference type="KEGG" id="osa:4329685"/>
<dbReference type="eggNOG" id="KOG0800">
    <property type="taxonomic scope" value="Eukaryota"/>
</dbReference>
<dbReference type="HOGENOM" id="CLU_066543_1_1_1"/>
<dbReference type="InParanoid" id="Q9LRB7"/>
<dbReference type="OMA" id="YSSWPSG"/>
<dbReference type="OrthoDB" id="773225at2759"/>
<dbReference type="PlantReactome" id="R-OSA-9030654">
    <property type="pathway name" value="Primary root development"/>
</dbReference>
<dbReference type="UniPathway" id="UPA00143"/>
<dbReference type="EvolutionaryTrace" id="Q9LRB7"/>
<dbReference type="Proteomes" id="UP000000763">
    <property type="component" value="Chromosome 2"/>
</dbReference>
<dbReference type="Proteomes" id="UP000059680">
    <property type="component" value="Chromosome 2"/>
</dbReference>
<dbReference type="GO" id="GO:0016020">
    <property type="term" value="C:membrane"/>
    <property type="evidence" value="ECO:0000318"/>
    <property type="project" value="GO_Central"/>
</dbReference>
<dbReference type="GO" id="GO:0005886">
    <property type="term" value="C:plasma membrane"/>
    <property type="evidence" value="ECO:0000314"/>
    <property type="project" value="UniProtKB"/>
</dbReference>
<dbReference type="GO" id="GO:0061630">
    <property type="term" value="F:ubiquitin protein ligase activity"/>
    <property type="evidence" value="ECO:0000318"/>
    <property type="project" value="GO_Central"/>
</dbReference>
<dbReference type="GO" id="GO:0004842">
    <property type="term" value="F:ubiquitin-protein transferase activity"/>
    <property type="evidence" value="ECO:0000314"/>
    <property type="project" value="UniProtKB"/>
</dbReference>
<dbReference type="GO" id="GO:0008270">
    <property type="term" value="F:zinc ion binding"/>
    <property type="evidence" value="ECO:0007669"/>
    <property type="project" value="UniProtKB-KW"/>
</dbReference>
<dbReference type="GO" id="GO:0051301">
    <property type="term" value="P:cell division"/>
    <property type="evidence" value="ECO:0000315"/>
    <property type="project" value="UniProtKB"/>
</dbReference>
<dbReference type="GO" id="GO:0016567">
    <property type="term" value="P:protein ubiquitination"/>
    <property type="evidence" value="ECO:0000314"/>
    <property type="project" value="UniProtKB"/>
</dbReference>
<dbReference type="GO" id="GO:0048364">
    <property type="term" value="P:root development"/>
    <property type="evidence" value="ECO:0000315"/>
    <property type="project" value="UniProtKB"/>
</dbReference>
<dbReference type="GO" id="GO:0006511">
    <property type="term" value="P:ubiquitin-dependent protein catabolic process"/>
    <property type="evidence" value="ECO:0000318"/>
    <property type="project" value="GO_Central"/>
</dbReference>
<dbReference type="CDD" id="cd16461">
    <property type="entry name" value="RING-H2_EL5-like"/>
    <property type="match status" value="1"/>
</dbReference>
<dbReference type="FunFam" id="3.30.40.10:FF:000918">
    <property type="entry name" value="E3 ubiquitin-protein ligase EL5"/>
    <property type="match status" value="1"/>
</dbReference>
<dbReference type="Gene3D" id="3.30.40.10">
    <property type="entry name" value="Zinc/RING finger domain, C3HC4 (zinc finger)"/>
    <property type="match status" value="1"/>
</dbReference>
<dbReference type="InterPro" id="IPR044600">
    <property type="entry name" value="ATL1/ATL16-like"/>
</dbReference>
<dbReference type="InterPro" id="IPR001841">
    <property type="entry name" value="Znf_RING"/>
</dbReference>
<dbReference type="InterPro" id="IPR013083">
    <property type="entry name" value="Znf_RING/FYVE/PHD"/>
</dbReference>
<dbReference type="PANTHER" id="PTHR46913">
    <property type="entry name" value="RING-H2 FINGER PROTEIN ATL16"/>
    <property type="match status" value="1"/>
</dbReference>
<dbReference type="PANTHER" id="PTHR46913:SF21">
    <property type="entry name" value="RING-TYPE E3 UBIQUITIN TRANSFERASE"/>
    <property type="match status" value="1"/>
</dbReference>
<dbReference type="Pfam" id="PF13639">
    <property type="entry name" value="zf-RING_2"/>
    <property type="match status" value="1"/>
</dbReference>
<dbReference type="SMART" id="SM00184">
    <property type="entry name" value="RING"/>
    <property type="match status" value="1"/>
</dbReference>
<dbReference type="SUPFAM" id="SSF57850">
    <property type="entry name" value="RING/U-box"/>
    <property type="match status" value="1"/>
</dbReference>
<dbReference type="PROSITE" id="PS50089">
    <property type="entry name" value="ZF_RING_2"/>
    <property type="match status" value="1"/>
</dbReference>
<keyword id="KW-0002">3D-structure</keyword>
<keyword id="KW-1003">Cell membrane</keyword>
<keyword id="KW-0472">Membrane</keyword>
<keyword id="KW-0479">Metal-binding</keyword>
<keyword id="KW-1185">Reference proteome</keyword>
<keyword id="KW-0808">Transferase</keyword>
<keyword id="KW-0812">Transmembrane</keyword>
<keyword id="KW-1133">Transmembrane helix</keyword>
<keyword id="KW-0833">Ubl conjugation pathway</keyword>
<keyword id="KW-0862">Zinc</keyword>
<keyword id="KW-0863">Zinc-finger</keyword>
<evidence type="ECO:0000255" key="1"/>
<evidence type="ECO:0000255" key="2">
    <source>
        <dbReference type="PROSITE-ProRule" id="PRU00175"/>
    </source>
</evidence>
<evidence type="ECO:0000256" key="3">
    <source>
        <dbReference type="SAM" id="MobiDB-lite"/>
    </source>
</evidence>
<evidence type="ECO:0000269" key="4">
    <source>
    </source>
</evidence>
<evidence type="ECO:0000269" key="5">
    <source>
    </source>
</evidence>
<evidence type="ECO:0000269" key="6">
    <source>
    </source>
</evidence>
<evidence type="ECO:0000269" key="7">
    <source>
    </source>
</evidence>
<evidence type="ECO:0000269" key="8">
    <source>
    </source>
</evidence>
<evidence type="ECO:0000305" key="9"/>
<evidence type="ECO:0007829" key="10">
    <source>
        <dbReference type="PDB" id="1IYM"/>
    </source>
</evidence>
<gene>
    <name type="primary">EL5.1</name>
    <name type="synonym">EL5</name>
    <name type="ordered locus">Os02g0559800</name>
    <name type="ordered locus">LOC_Os02g35329</name>
    <name type="ORF">P0435E12.16</name>
</gene>
<gene>
    <name type="primary">EL5.2</name>
    <name type="synonym">EL5</name>
    <name type="ordered locus">Os02g0560200</name>
    <name type="ordered locus">LOC_Os02g35347</name>
    <name type="ORF">P0435E12.20</name>
</gene>
<gene>
    <name type="primary">EL5.3</name>
    <name type="synonym">EL5</name>
    <name type="ordered locus">Os02g0560600</name>
    <name type="ordered locus">LOC_Os02g35365</name>
    <name type="ORF">P0435E12.24</name>
</gene>
<gene>
    <name type="primary">EL5.4</name>
    <name type="synonym">EL5</name>
    <name type="ordered locus">Os02g0561000</name>
    <name type="ordered locus">LOC_Os02g35383</name>
    <name type="ORF">P0435E12.28</name>
</gene>
<gene>
    <name type="primary">EL5.5</name>
    <name type="synonym">EL5</name>
    <name type="ordered locus">Os02g0561400</name>
    <name type="ordered locus">LOC_Os02g35401</name>
    <name type="ORF">P0435E12.32</name>
</gene>
<gene>
    <name type="primary">EL5.6</name>
    <name type="synonym">EL5</name>
    <name type="ordered locus">Os02g0561800</name>
    <name type="ordered locus">LOC_Os02g35429</name>
    <name type="ORF">P0435E12.37</name>
</gene>
<comment type="function">
    <text evidence="5 6 7 8">Functions as an E3 ubiquitin-protein ligase in cooperation with the E2 ubiquitin conjugating enzymes UBC5A and UBC5B. Involved in root development. Required for the maintenance of cell viability after the initiation of root primordial formation. May mediate the degradation of cytotoxic proteins produced in root cells after the actions of auxin, cytokinin and jasmonic acid. Mediates 'Lys-48'-linked polyubiquitination of MBP in vitro.</text>
</comment>
<comment type="catalytic activity">
    <reaction evidence="5 6">
        <text>S-ubiquitinyl-[E2 ubiquitin-conjugating enzyme]-L-cysteine + [acceptor protein]-L-lysine = [E2 ubiquitin-conjugating enzyme]-L-cysteine + N(6)-ubiquitinyl-[acceptor protein]-L-lysine.</text>
        <dbReference type="EC" id="2.3.2.27"/>
    </reaction>
</comment>
<comment type="pathway">
    <text>Protein modification; protein ubiquitination.</text>
</comment>
<comment type="subcellular location">
    <subcellularLocation>
        <location evidence="7">Cell membrane</location>
        <topology evidence="7">Single-pass membrane protein</topology>
    </subcellularLocation>
</comment>
<comment type="induction">
    <text evidence="4">By N-acetylchitooligosaccharide elicitor and by protein phosphatase inhibitor calyculin A. Induction by N-acetylchitooligosaccharide elicitor is inhibited by the protein kinase inhibitor K-252a.</text>
</comment>
<comment type="domain">
    <text evidence="5">The RING-type zinc-finger domain is required for E3 ubiquitin ligase activity.</text>
</comment>
<accession>Q9LRB7</accession>
<accession>Q0E0C5</accession>
<organism>
    <name type="scientific">Oryza sativa subsp. japonica</name>
    <name type="common">Rice</name>
    <dbReference type="NCBI Taxonomy" id="39947"/>
    <lineage>
        <taxon>Eukaryota</taxon>
        <taxon>Viridiplantae</taxon>
        <taxon>Streptophyta</taxon>
        <taxon>Embryophyta</taxon>
        <taxon>Tracheophyta</taxon>
        <taxon>Spermatophyta</taxon>
        <taxon>Magnoliopsida</taxon>
        <taxon>Liliopsida</taxon>
        <taxon>Poales</taxon>
        <taxon>Poaceae</taxon>
        <taxon>BOP clade</taxon>
        <taxon>Oryzoideae</taxon>
        <taxon>Oryzeae</taxon>
        <taxon>Oryzinae</taxon>
        <taxon>Oryza</taxon>
        <taxon>Oryza sativa</taxon>
    </lineage>
</organism>
<protein>
    <recommendedName>
        <fullName>E3 ubiquitin-protein ligase EL5</fullName>
        <ecNumber evidence="5 6">2.3.2.27</ecNumber>
    </recommendedName>
    <alternativeName>
        <fullName>Protein ELICITOR 5</fullName>
    </alternativeName>
    <alternativeName>
        <fullName evidence="9">RING-type E3 ubiquitin transferase EL5</fullName>
    </alternativeName>
</protein>
<name>EL5_ORYSJ</name>